<reference key="1">
    <citation type="journal article" date="2006" name="Nat. Biotechnol.">
        <title>Complete genome sequence of the entomopathogenic and metabolically versatile soil bacterium Pseudomonas entomophila.</title>
        <authorList>
            <person name="Vodovar N."/>
            <person name="Vallenet D."/>
            <person name="Cruveiller S."/>
            <person name="Rouy Z."/>
            <person name="Barbe V."/>
            <person name="Acosta C."/>
            <person name="Cattolico L."/>
            <person name="Jubin C."/>
            <person name="Lajus A."/>
            <person name="Segurens B."/>
            <person name="Vacherie B."/>
            <person name="Wincker P."/>
            <person name="Weissenbach J."/>
            <person name="Lemaitre B."/>
            <person name="Medigue C."/>
            <person name="Boccard F."/>
        </authorList>
    </citation>
    <scope>NUCLEOTIDE SEQUENCE [LARGE SCALE GENOMIC DNA]</scope>
    <source>
        <strain>L48</strain>
    </source>
</reference>
<name>GATA_PSEE4</name>
<sequence length="483" mass="51568">MHQLTLAEIARGLADKSFSSEELTGALLSRIKQLDPQLNSFITVTEEQALHQARAADARRAAGETGALLGAPIAHKDLFCTQGVRTSCGSKMLDNFTAPYDATVVAKLAEAGMVTLGKTNMDEFAMGSANESSHYGAVKNPWNLEHVPGGSSGGSAAAVAARLLPATTGTDTGGSIRQPAALTNLTGLKPTYGRVSRWGMIAYASSLDQGGPLARTAEDCALLLQGMAGFDSKDSTSVEEPVPNFSADLNASLQGLRIGLPKEYFGAGLDPRIAERVQASVKELEKLGAVVKEISLPNMQHAIAAYYVIAPAEASSNLSRFDGVRFGHRCADPKDLTDLYKRSRGEGFGVEVQRRIMVGTYALSAGYYDAYYVKAQQIRRLIKNDFVAAFNDVDVIIGPTTPNPAWKIGAKAGDPIAEYLEDLYTITANLAGLPGLSMPAGFVDGLPVGVQLLAPYFQEGRLLNIAHRYQQVTDWHTRAPNGF</sequence>
<protein>
    <recommendedName>
        <fullName evidence="1">Glutamyl-tRNA(Gln) amidotransferase subunit A</fullName>
        <shortName evidence="1">Glu-ADT subunit A</shortName>
        <ecNumber evidence="1">6.3.5.7</ecNumber>
    </recommendedName>
</protein>
<gene>
    <name evidence="1" type="primary">gatA</name>
    <name type="ordered locus">PSEEN1072</name>
</gene>
<feature type="chain" id="PRO_1000015887" description="Glutamyl-tRNA(Gln) amidotransferase subunit A">
    <location>
        <begin position="1"/>
        <end position="483"/>
    </location>
</feature>
<feature type="active site" description="Charge relay system" evidence="1">
    <location>
        <position position="76"/>
    </location>
</feature>
<feature type="active site" description="Charge relay system" evidence="1">
    <location>
        <position position="151"/>
    </location>
</feature>
<feature type="active site" description="Acyl-ester intermediate" evidence="1">
    <location>
        <position position="175"/>
    </location>
</feature>
<accession>Q1IED3</accession>
<organism>
    <name type="scientific">Pseudomonas entomophila (strain L48)</name>
    <dbReference type="NCBI Taxonomy" id="384676"/>
    <lineage>
        <taxon>Bacteria</taxon>
        <taxon>Pseudomonadati</taxon>
        <taxon>Pseudomonadota</taxon>
        <taxon>Gammaproteobacteria</taxon>
        <taxon>Pseudomonadales</taxon>
        <taxon>Pseudomonadaceae</taxon>
        <taxon>Pseudomonas</taxon>
    </lineage>
</organism>
<comment type="function">
    <text evidence="1">Allows the formation of correctly charged Gln-tRNA(Gln) through the transamidation of misacylated Glu-tRNA(Gln) in organisms which lack glutaminyl-tRNA synthetase. The reaction takes place in the presence of glutamine and ATP through an activated gamma-phospho-Glu-tRNA(Gln).</text>
</comment>
<comment type="catalytic activity">
    <reaction evidence="1">
        <text>L-glutamyl-tRNA(Gln) + L-glutamine + ATP + H2O = L-glutaminyl-tRNA(Gln) + L-glutamate + ADP + phosphate + H(+)</text>
        <dbReference type="Rhea" id="RHEA:17521"/>
        <dbReference type="Rhea" id="RHEA-COMP:9681"/>
        <dbReference type="Rhea" id="RHEA-COMP:9684"/>
        <dbReference type="ChEBI" id="CHEBI:15377"/>
        <dbReference type="ChEBI" id="CHEBI:15378"/>
        <dbReference type="ChEBI" id="CHEBI:29985"/>
        <dbReference type="ChEBI" id="CHEBI:30616"/>
        <dbReference type="ChEBI" id="CHEBI:43474"/>
        <dbReference type="ChEBI" id="CHEBI:58359"/>
        <dbReference type="ChEBI" id="CHEBI:78520"/>
        <dbReference type="ChEBI" id="CHEBI:78521"/>
        <dbReference type="ChEBI" id="CHEBI:456216"/>
        <dbReference type="EC" id="6.3.5.7"/>
    </reaction>
</comment>
<comment type="subunit">
    <text evidence="1">Heterotrimer of A, B and C subunits.</text>
</comment>
<comment type="similarity">
    <text evidence="1">Belongs to the amidase family. GatA subfamily.</text>
</comment>
<evidence type="ECO:0000255" key="1">
    <source>
        <dbReference type="HAMAP-Rule" id="MF_00120"/>
    </source>
</evidence>
<keyword id="KW-0067">ATP-binding</keyword>
<keyword id="KW-0436">Ligase</keyword>
<keyword id="KW-0547">Nucleotide-binding</keyword>
<keyword id="KW-0648">Protein biosynthesis</keyword>
<proteinExistence type="inferred from homology"/>
<dbReference type="EC" id="6.3.5.7" evidence="1"/>
<dbReference type="EMBL" id="CT573326">
    <property type="protein sequence ID" value="CAK13972.1"/>
    <property type="molecule type" value="Genomic_DNA"/>
</dbReference>
<dbReference type="RefSeq" id="WP_011532395.1">
    <property type="nucleotide sequence ID" value="NC_008027.1"/>
</dbReference>
<dbReference type="SMR" id="Q1IED3"/>
<dbReference type="STRING" id="384676.PSEEN1072"/>
<dbReference type="GeneID" id="32804363"/>
<dbReference type="KEGG" id="pen:PSEEN1072"/>
<dbReference type="eggNOG" id="COG0154">
    <property type="taxonomic scope" value="Bacteria"/>
</dbReference>
<dbReference type="HOGENOM" id="CLU_009600_0_3_6"/>
<dbReference type="OrthoDB" id="9811471at2"/>
<dbReference type="Proteomes" id="UP000000658">
    <property type="component" value="Chromosome"/>
</dbReference>
<dbReference type="GO" id="GO:0030956">
    <property type="term" value="C:glutamyl-tRNA(Gln) amidotransferase complex"/>
    <property type="evidence" value="ECO:0007669"/>
    <property type="project" value="InterPro"/>
</dbReference>
<dbReference type="GO" id="GO:0005524">
    <property type="term" value="F:ATP binding"/>
    <property type="evidence" value="ECO:0007669"/>
    <property type="project" value="UniProtKB-KW"/>
</dbReference>
<dbReference type="GO" id="GO:0050567">
    <property type="term" value="F:glutaminyl-tRNA synthase (glutamine-hydrolyzing) activity"/>
    <property type="evidence" value="ECO:0007669"/>
    <property type="project" value="UniProtKB-UniRule"/>
</dbReference>
<dbReference type="GO" id="GO:0006412">
    <property type="term" value="P:translation"/>
    <property type="evidence" value="ECO:0007669"/>
    <property type="project" value="UniProtKB-UniRule"/>
</dbReference>
<dbReference type="Gene3D" id="3.90.1300.10">
    <property type="entry name" value="Amidase signature (AS) domain"/>
    <property type="match status" value="1"/>
</dbReference>
<dbReference type="HAMAP" id="MF_00120">
    <property type="entry name" value="GatA"/>
    <property type="match status" value="1"/>
</dbReference>
<dbReference type="InterPro" id="IPR000120">
    <property type="entry name" value="Amidase"/>
</dbReference>
<dbReference type="InterPro" id="IPR020556">
    <property type="entry name" value="Amidase_CS"/>
</dbReference>
<dbReference type="InterPro" id="IPR023631">
    <property type="entry name" value="Amidase_dom"/>
</dbReference>
<dbReference type="InterPro" id="IPR036928">
    <property type="entry name" value="AS_sf"/>
</dbReference>
<dbReference type="InterPro" id="IPR004412">
    <property type="entry name" value="GatA"/>
</dbReference>
<dbReference type="NCBIfam" id="TIGR00132">
    <property type="entry name" value="gatA"/>
    <property type="match status" value="1"/>
</dbReference>
<dbReference type="PANTHER" id="PTHR11895:SF151">
    <property type="entry name" value="GLUTAMYL-TRNA(GLN) AMIDOTRANSFERASE SUBUNIT A"/>
    <property type="match status" value="1"/>
</dbReference>
<dbReference type="PANTHER" id="PTHR11895">
    <property type="entry name" value="TRANSAMIDASE"/>
    <property type="match status" value="1"/>
</dbReference>
<dbReference type="Pfam" id="PF01425">
    <property type="entry name" value="Amidase"/>
    <property type="match status" value="1"/>
</dbReference>
<dbReference type="SUPFAM" id="SSF75304">
    <property type="entry name" value="Amidase signature (AS) enzymes"/>
    <property type="match status" value="1"/>
</dbReference>
<dbReference type="PROSITE" id="PS00571">
    <property type="entry name" value="AMIDASES"/>
    <property type="match status" value="1"/>
</dbReference>